<dbReference type="EC" id="2.1.1.228"/>
<dbReference type="EMBL" id="AL939124">
    <property type="protein sequence ID" value="CAA19386.1"/>
    <property type="molecule type" value="Genomic_DNA"/>
</dbReference>
<dbReference type="PIR" id="T34779">
    <property type="entry name" value="T34779"/>
</dbReference>
<dbReference type="RefSeq" id="NP_629728.1">
    <property type="nucleotide sequence ID" value="NC_003888.3"/>
</dbReference>
<dbReference type="RefSeq" id="WP_003973399.1">
    <property type="nucleotide sequence ID" value="NZ_VNID01000034.1"/>
</dbReference>
<dbReference type="SMR" id="P0A4P1"/>
<dbReference type="FunCoup" id="P0A4P1">
    <property type="interactions" value="136"/>
</dbReference>
<dbReference type="STRING" id="100226.gene:17763252"/>
<dbReference type="PaxDb" id="100226-SCO5594"/>
<dbReference type="GeneID" id="91383432"/>
<dbReference type="KEGG" id="sco:SCO5594"/>
<dbReference type="PATRIC" id="fig|100226.15.peg.5686"/>
<dbReference type="eggNOG" id="COG0336">
    <property type="taxonomic scope" value="Bacteria"/>
</dbReference>
<dbReference type="HOGENOM" id="CLU_047363_0_0_11"/>
<dbReference type="InParanoid" id="P0A4P1"/>
<dbReference type="OrthoDB" id="9807416at2"/>
<dbReference type="PhylomeDB" id="P0A4P1"/>
<dbReference type="Proteomes" id="UP000001973">
    <property type="component" value="Chromosome"/>
</dbReference>
<dbReference type="GO" id="GO:0005829">
    <property type="term" value="C:cytosol"/>
    <property type="evidence" value="ECO:0000318"/>
    <property type="project" value="GO_Central"/>
</dbReference>
<dbReference type="GO" id="GO:0052906">
    <property type="term" value="F:tRNA (guanine(37)-N1)-methyltransferase activity"/>
    <property type="evidence" value="ECO:0000318"/>
    <property type="project" value="GO_Central"/>
</dbReference>
<dbReference type="GO" id="GO:0002939">
    <property type="term" value="P:tRNA N1-guanine methylation"/>
    <property type="evidence" value="ECO:0000318"/>
    <property type="project" value="GO_Central"/>
</dbReference>
<dbReference type="CDD" id="cd18080">
    <property type="entry name" value="TrmD-like"/>
    <property type="match status" value="1"/>
</dbReference>
<dbReference type="FunFam" id="1.10.1270.20:FF:000002">
    <property type="entry name" value="tRNA (guanine-N(1)-)-methyltransferase"/>
    <property type="match status" value="1"/>
</dbReference>
<dbReference type="FunFam" id="3.40.1280.10:FF:000001">
    <property type="entry name" value="tRNA (guanine-N(1)-)-methyltransferase"/>
    <property type="match status" value="1"/>
</dbReference>
<dbReference type="Gene3D" id="3.40.1280.10">
    <property type="match status" value="1"/>
</dbReference>
<dbReference type="Gene3D" id="1.10.1270.20">
    <property type="entry name" value="tRNA(m1g37)methyltransferase, domain 2"/>
    <property type="match status" value="1"/>
</dbReference>
<dbReference type="HAMAP" id="MF_00605">
    <property type="entry name" value="TrmD"/>
    <property type="match status" value="1"/>
</dbReference>
<dbReference type="InterPro" id="IPR029028">
    <property type="entry name" value="Alpha/beta_knot_MTases"/>
</dbReference>
<dbReference type="InterPro" id="IPR023148">
    <property type="entry name" value="tRNA_m1G_MeTrfase_C_sf"/>
</dbReference>
<dbReference type="InterPro" id="IPR002649">
    <property type="entry name" value="tRNA_m1G_MeTrfase_TrmD"/>
</dbReference>
<dbReference type="InterPro" id="IPR029026">
    <property type="entry name" value="tRNA_m1G_MTases_N"/>
</dbReference>
<dbReference type="InterPro" id="IPR016009">
    <property type="entry name" value="tRNA_MeTrfase_TRMD/TRM10"/>
</dbReference>
<dbReference type="NCBIfam" id="NF000648">
    <property type="entry name" value="PRK00026.1"/>
    <property type="match status" value="1"/>
</dbReference>
<dbReference type="NCBIfam" id="TIGR00088">
    <property type="entry name" value="trmD"/>
    <property type="match status" value="1"/>
</dbReference>
<dbReference type="PANTHER" id="PTHR46417">
    <property type="entry name" value="TRNA (GUANINE-N(1)-)-METHYLTRANSFERASE"/>
    <property type="match status" value="1"/>
</dbReference>
<dbReference type="PANTHER" id="PTHR46417:SF1">
    <property type="entry name" value="TRNA (GUANINE-N(1)-)-METHYLTRANSFERASE"/>
    <property type="match status" value="1"/>
</dbReference>
<dbReference type="Pfam" id="PF01746">
    <property type="entry name" value="tRNA_m1G_MT"/>
    <property type="match status" value="1"/>
</dbReference>
<dbReference type="PIRSF" id="PIRSF000386">
    <property type="entry name" value="tRNA_mtase"/>
    <property type="match status" value="1"/>
</dbReference>
<dbReference type="SUPFAM" id="SSF75217">
    <property type="entry name" value="alpha/beta knot"/>
    <property type="match status" value="1"/>
</dbReference>
<proteinExistence type="inferred from homology"/>
<reference key="1">
    <citation type="journal article" date="2002" name="Nature">
        <title>Complete genome sequence of the model actinomycete Streptomyces coelicolor A3(2).</title>
        <authorList>
            <person name="Bentley S.D."/>
            <person name="Chater K.F."/>
            <person name="Cerdeno-Tarraga A.-M."/>
            <person name="Challis G.L."/>
            <person name="Thomson N.R."/>
            <person name="James K.D."/>
            <person name="Harris D.E."/>
            <person name="Quail M.A."/>
            <person name="Kieser H."/>
            <person name="Harper D."/>
            <person name="Bateman A."/>
            <person name="Brown S."/>
            <person name="Chandra G."/>
            <person name="Chen C.W."/>
            <person name="Collins M."/>
            <person name="Cronin A."/>
            <person name="Fraser A."/>
            <person name="Goble A."/>
            <person name="Hidalgo J."/>
            <person name="Hornsby T."/>
            <person name="Howarth S."/>
            <person name="Huang C.-H."/>
            <person name="Kieser T."/>
            <person name="Larke L."/>
            <person name="Murphy L.D."/>
            <person name="Oliver K."/>
            <person name="O'Neil S."/>
            <person name="Rabbinowitsch E."/>
            <person name="Rajandream M.A."/>
            <person name="Rutherford K.M."/>
            <person name="Rutter S."/>
            <person name="Seeger K."/>
            <person name="Saunders D."/>
            <person name="Sharp S."/>
            <person name="Squares R."/>
            <person name="Squares S."/>
            <person name="Taylor K."/>
            <person name="Warren T."/>
            <person name="Wietzorrek A."/>
            <person name="Woodward J.R."/>
            <person name="Barrell B.G."/>
            <person name="Parkhill J."/>
            <person name="Hopwood D.A."/>
        </authorList>
    </citation>
    <scope>NUCLEOTIDE SEQUENCE [LARGE SCALE GENOMIC DNA]</scope>
    <source>
        <strain>ATCC BAA-471 / A3(2) / M145</strain>
    </source>
</reference>
<keyword id="KW-0963">Cytoplasm</keyword>
<keyword id="KW-0489">Methyltransferase</keyword>
<keyword id="KW-1185">Reference proteome</keyword>
<keyword id="KW-0949">S-adenosyl-L-methionine</keyword>
<keyword id="KW-0808">Transferase</keyword>
<keyword id="KW-0819">tRNA processing</keyword>
<feature type="chain" id="PRO_0000060477" description="tRNA (guanine-N(1)-)-methyltransferase">
    <location>
        <begin position="1"/>
        <end position="277"/>
    </location>
</feature>
<feature type="binding site" evidence="1">
    <location>
        <begin position="140"/>
        <end position="145"/>
    </location>
    <ligand>
        <name>S-adenosyl-L-methionine</name>
        <dbReference type="ChEBI" id="CHEBI:59789"/>
    </ligand>
</feature>
<evidence type="ECO:0000250" key="1"/>
<evidence type="ECO:0000305" key="2"/>
<organism>
    <name type="scientific">Streptomyces coelicolor (strain ATCC BAA-471 / A3(2) / M145)</name>
    <dbReference type="NCBI Taxonomy" id="100226"/>
    <lineage>
        <taxon>Bacteria</taxon>
        <taxon>Bacillati</taxon>
        <taxon>Actinomycetota</taxon>
        <taxon>Actinomycetes</taxon>
        <taxon>Kitasatosporales</taxon>
        <taxon>Streptomycetaceae</taxon>
        <taxon>Streptomyces</taxon>
        <taxon>Streptomyces albidoflavus group</taxon>
    </lineage>
</organism>
<protein>
    <recommendedName>
        <fullName>tRNA (guanine-N(1)-)-methyltransferase</fullName>
        <ecNumber>2.1.1.228</ecNumber>
    </recommendedName>
    <alternativeName>
        <fullName>M1G-methyltransferase</fullName>
    </alternativeName>
    <alternativeName>
        <fullName>tRNA [GM37] methyltransferase</fullName>
    </alternativeName>
</protein>
<accession>P0A4P1</accession>
<accession>O69882</accession>
<comment type="function">
    <text evidence="1">Specifically methylates guanosine-37 in various tRNAs.</text>
</comment>
<comment type="catalytic activity">
    <reaction>
        <text>guanosine(37) in tRNA + S-adenosyl-L-methionine = N(1)-methylguanosine(37) in tRNA + S-adenosyl-L-homocysteine + H(+)</text>
        <dbReference type="Rhea" id="RHEA:36899"/>
        <dbReference type="Rhea" id="RHEA-COMP:10145"/>
        <dbReference type="Rhea" id="RHEA-COMP:10147"/>
        <dbReference type="ChEBI" id="CHEBI:15378"/>
        <dbReference type="ChEBI" id="CHEBI:57856"/>
        <dbReference type="ChEBI" id="CHEBI:59789"/>
        <dbReference type="ChEBI" id="CHEBI:73542"/>
        <dbReference type="ChEBI" id="CHEBI:74269"/>
        <dbReference type="EC" id="2.1.1.228"/>
    </reaction>
</comment>
<comment type="subunit">
    <text evidence="1">Homodimer.</text>
</comment>
<comment type="subcellular location">
    <subcellularLocation>
        <location evidence="2">Cytoplasm</location>
    </subcellularLocation>
</comment>
<comment type="similarity">
    <text evidence="2">Belongs to the RNA methyltransferase TrmD family.</text>
</comment>
<gene>
    <name type="primary">trmD</name>
    <name type="ordered locus">SCO5594</name>
    <name type="ORF">SC2E1.11</name>
</gene>
<sequence>MRLDVVTIFPEYLEPLNVSLVGKARARGQLGVHVHDLRDWTYDRHNTVDDTPYGGGPGMVMKTEPWGDALDSVLADGYETGCGEPALVVPTPSGRPFTQELAVHLSERPWLIFTPARYEGIDRRVVDEYATRMPVYEVSIGDYVLAGGEAAVLVVTEAVARLLPGVLGNAESHRDDSFAPGAMANLLEGPVHTKPPQWRGRGIPDVLLSGHHGKIARWRRDEALRRTTANRPDLIERCDPAAFDKKDREMLSILGWQPDPDGEPYGRFWRRTPGMEE</sequence>
<name>TRMD_STRCO</name>